<sequence length="175" mass="20135">MHTLNSEEETKKLAKLLAQSLKPNDIVLLNGDLGAGKTFFCREIIKYFCGENTSIISPTFNLLQTYKASNFTIYHYDLYRLKSPEEIYELGFEEALNGNLILIEWSEIIKHLLTPPLIEVNLEALDNNKRLCSIITNHKENSQESSLIDFLQDSPLFDTKLDIQRDKSPTRKVKL</sequence>
<keyword id="KW-0067">ATP-binding</keyword>
<keyword id="KW-0963">Cytoplasm</keyword>
<keyword id="KW-0460">Magnesium</keyword>
<keyword id="KW-0479">Metal-binding</keyword>
<keyword id="KW-0547">Nucleotide-binding</keyword>
<keyword id="KW-0819">tRNA processing</keyword>
<comment type="function">
    <text evidence="1">Required for the formation of a threonylcarbamoyl group on adenosine at position 37 (t(6)A37) in tRNAs that read codons beginning with adenine. Is involved in the transfer of the threonylcarbamoyl moiety of threonylcarbamoyl-AMP (TC-AMP) to the N6 group of A37, together with TsaD and TsaB. TsaE seems to play an indirect role in the t(6)A biosynthesis pathway, possibly in regulating the core enzymatic function of TsaD (By similarity).</text>
</comment>
<comment type="subcellular location">
    <subcellularLocation>
        <location evidence="1">Cytoplasm</location>
    </subcellularLocation>
</comment>
<comment type="similarity">
    <text evidence="2">Belongs to the TsaE family.</text>
</comment>
<accession>Q92JQ4</accession>
<evidence type="ECO:0000250" key="1"/>
<evidence type="ECO:0000305" key="2"/>
<reference key="1">
    <citation type="journal article" date="2001" name="Science">
        <title>Mechanisms of evolution in Rickettsia conorii and R. prowazekii.</title>
        <authorList>
            <person name="Ogata H."/>
            <person name="Audic S."/>
            <person name="Renesto-Audiffren P."/>
            <person name="Fournier P.-E."/>
            <person name="Barbe V."/>
            <person name="Samson D."/>
            <person name="Roux V."/>
            <person name="Cossart P."/>
            <person name="Weissenbach J."/>
            <person name="Claverie J.-M."/>
            <person name="Raoult D."/>
        </authorList>
    </citation>
    <scope>NUCLEOTIDE SEQUENCE [LARGE SCALE GENOMIC DNA]</scope>
    <source>
        <strain>ATCC VR-613 / Malish 7</strain>
    </source>
</reference>
<name>TSAE_RICCN</name>
<protein>
    <recommendedName>
        <fullName>tRNA threonylcarbamoyladenosine biosynthesis protein TsaE</fullName>
    </recommendedName>
    <alternativeName>
        <fullName>t(6)A37 threonylcarbamoyladenosine biosynthesis protein TsaE</fullName>
    </alternativeName>
</protein>
<proteinExistence type="inferred from homology"/>
<feature type="chain" id="PRO_0000096216" description="tRNA threonylcarbamoyladenosine biosynthesis protein TsaE">
    <location>
        <begin position="1"/>
        <end position="175"/>
    </location>
</feature>
<feature type="binding site" evidence="1">
    <location>
        <position position="7"/>
    </location>
    <ligand>
        <name>ATP</name>
        <dbReference type="ChEBI" id="CHEBI:30616"/>
    </ligand>
</feature>
<feature type="binding site" evidence="1">
    <location>
        <begin position="34"/>
        <end position="39"/>
    </location>
    <ligand>
        <name>ATP</name>
        <dbReference type="ChEBI" id="CHEBI:30616"/>
    </ligand>
</feature>
<feature type="binding site" evidence="1">
    <location>
        <position position="38"/>
    </location>
    <ligand>
        <name>Mg(2+)</name>
        <dbReference type="ChEBI" id="CHEBI:18420"/>
    </ligand>
</feature>
<feature type="binding site" evidence="1">
    <location>
        <position position="104"/>
    </location>
    <ligand>
        <name>Mg(2+)</name>
        <dbReference type="ChEBI" id="CHEBI:18420"/>
    </ligand>
</feature>
<organism>
    <name type="scientific">Rickettsia conorii (strain ATCC VR-613 / Malish 7)</name>
    <dbReference type="NCBI Taxonomy" id="272944"/>
    <lineage>
        <taxon>Bacteria</taxon>
        <taxon>Pseudomonadati</taxon>
        <taxon>Pseudomonadota</taxon>
        <taxon>Alphaproteobacteria</taxon>
        <taxon>Rickettsiales</taxon>
        <taxon>Rickettsiaceae</taxon>
        <taxon>Rickettsieae</taxon>
        <taxon>Rickettsia</taxon>
        <taxon>spotted fever group</taxon>
    </lineage>
</organism>
<dbReference type="EMBL" id="AE006914">
    <property type="protein sequence ID" value="AAL02551.1"/>
    <property type="molecule type" value="Genomic_DNA"/>
</dbReference>
<dbReference type="PIR" id="E97701">
    <property type="entry name" value="E97701"/>
</dbReference>
<dbReference type="RefSeq" id="WP_010976701.1">
    <property type="nucleotide sequence ID" value="NC_003103.1"/>
</dbReference>
<dbReference type="SMR" id="Q92JQ4"/>
<dbReference type="GeneID" id="928653"/>
<dbReference type="KEGG" id="rco:RC0013"/>
<dbReference type="PATRIC" id="fig|272944.4.peg.14"/>
<dbReference type="HOGENOM" id="CLU_087829_5_0_5"/>
<dbReference type="Proteomes" id="UP000000816">
    <property type="component" value="Chromosome"/>
</dbReference>
<dbReference type="GO" id="GO:0005737">
    <property type="term" value="C:cytoplasm"/>
    <property type="evidence" value="ECO:0007669"/>
    <property type="project" value="UniProtKB-SubCell"/>
</dbReference>
<dbReference type="GO" id="GO:0005524">
    <property type="term" value="F:ATP binding"/>
    <property type="evidence" value="ECO:0007669"/>
    <property type="project" value="UniProtKB-KW"/>
</dbReference>
<dbReference type="GO" id="GO:0046872">
    <property type="term" value="F:metal ion binding"/>
    <property type="evidence" value="ECO:0007669"/>
    <property type="project" value="UniProtKB-KW"/>
</dbReference>
<dbReference type="GO" id="GO:0002949">
    <property type="term" value="P:tRNA threonylcarbamoyladenosine modification"/>
    <property type="evidence" value="ECO:0007669"/>
    <property type="project" value="InterPro"/>
</dbReference>
<dbReference type="Gene3D" id="3.40.50.300">
    <property type="entry name" value="P-loop containing nucleotide triphosphate hydrolases"/>
    <property type="match status" value="1"/>
</dbReference>
<dbReference type="InterPro" id="IPR027417">
    <property type="entry name" value="P-loop_NTPase"/>
</dbReference>
<dbReference type="InterPro" id="IPR003442">
    <property type="entry name" value="T6A_TsaE"/>
</dbReference>
<dbReference type="NCBIfam" id="TIGR00150">
    <property type="entry name" value="T6A_YjeE"/>
    <property type="match status" value="1"/>
</dbReference>
<dbReference type="PANTHER" id="PTHR33540">
    <property type="entry name" value="TRNA THREONYLCARBAMOYLADENOSINE BIOSYNTHESIS PROTEIN TSAE"/>
    <property type="match status" value="1"/>
</dbReference>
<dbReference type="PANTHER" id="PTHR33540:SF2">
    <property type="entry name" value="TRNA THREONYLCARBAMOYLADENOSINE BIOSYNTHESIS PROTEIN TSAE"/>
    <property type="match status" value="1"/>
</dbReference>
<dbReference type="Pfam" id="PF02367">
    <property type="entry name" value="TsaE"/>
    <property type="match status" value="1"/>
</dbReference>
<dbReference type="SUPFAM" id="SSF52540">
    <property type="entry name" value="P-loop containing nucleoside triphosphate hydrolases"/>
    <property type="match status" value="1"/>
</dbReference>
<gene>
    <name type="primary">tsaE</name>
    <name type="ordered locus">RC0013</name>
</gene>